<accession>Q9JYD2</accession>
<sequence length="962" mass="103143">MSNTTVEQFAAELKRPVEDLLKQLKEAGVSKNSGSDSLTLDDKQLLNAYLTKKNGSNSSTISIRRTKTEVSTVDGVKVETRKRGRTVKIPSAEELAAQVKAAQTQAAPVRPEQTAEDAAKARAEAAARAEARAKAEAEAAKLKAAKAGNKAKPAAQKPTEAKAETAPVAAETKPAEESKAEKAQADKMPSEKPAEPKEKAAKPKHERNGKGKDAKKPAKPAAPAVPQPVVSAEEQAQRDEEARRAAALRAHQEALLKEKQERQARREAMKQQAEQQAKAAQEAKTGRQRPAKPAEKPQAAAPAVENKPVNPAKAKKEDRRNRDDEGQGRNAKGKGGKGGRDRNNARNGDDERVRGGKKGKKLKLEPNQHAFQAPTEPVVHEVLVPETITVADLAHKMAVKGVEVVKALMKMGMMVTINQSIDQDTALIVVEELGHIGKPAAADDPEAFLDEGAEAVEAEALPRPPVVTVMGHVDHGKTSLLDYIRRTKVVQGEAGGITQHIGAYHVETPRGVITFLDTPGHEAFTAMRARGAKATDIVILVVAADDGVMPQTIEAIAHAKAAGVPMVVAVNKIDKEAANPERIRQELTAHEVVPDEWGGDVQFIDVSAKKGLNIDALLEAVLLEAEVLELTAPVDAPAKGIIVEARLDKGRGAVATLLVQSGTLKKGDMLLAGTAFGKIRAMVDENGKSITEAGPSIPVEILGLSDVPNAGEDAMVLADEKKAREIALFRQGKYRDVRLAKQQAAKLENMFNNMGETQAQSLSVIIKADVQGSYEALAGSLKKLSTDEVKVNVLHSGVGGITESDVNLAIASGAFIIGFNVRADASSRKLAENENVEIRYYNIIYDAINDVKAAMSGMLSPEEKEQVTGTVEIRQVISVSKVGNIAGCMVTDGVVKRDSHVRLIRNNVVIHTGELASLKRYKDDVKEVRMGFECGLMLKGYNEIMEGDQLECFDIVEVARSL</sequence>
<keyword id="KW-0963">Cytoplasm</keyword>
<keyword id="KW-0342">GTP-binding</keyword>
<keyword id="KW-0396">Initiation factor</keyword>
<keyword id="KW-0547">Nucleotide-binding</keyword>
<keyword id="KW-0648">Protein biosynthesis</keyword>
<keyword id="KW-1185">Reference proteome</keyword>
<comment type="function">
    <text evidence="2">One of the essential components for the initiation of protein synthesis. Protects formylmethionyl-tRNA from spontaneous hydrolysis and promotes its binding to the 30S ribosomal subunits. Also involved in the hydrolysis of GTP during the formation of the 70S ribosomal complex.</text>
</comment>
<comment type="subcellular location">
    <subcellularLocation>
        <location evidence="2">Cytoplasm</location>
    </subcellularLocation>
</comment>
<comment type="similarity">
    <text evidence="2">Belongs to the TRAFAC class translation factor GTPase superfamily. Classic translation factor GTPase family. IF-2 subfamily.</text>
</comment>
<organism>
    <name type="scientific">Neisseria meningitidis serogroup B (strain ATCC BAA-335 / MC58)</name>
    <dbReference type="NCBI Taxonomy" id="122586"/>
    <lineage>
        <taxon>Bacteria</taxon>
        <taxon>Pseudomonadati</taxon>
        <taxon>Pseudomonadota</taxon>
        <taxon>Betaproteobacteria</taxon>
        <taxon>Neisseriales</taxon>
        <taxon>Neisseriaceae</taxon>
        <taxon>Neisseria</taxon>
    </lineage>
</organism>
<gene>
    <name evidence="2" type="primary">infB</name>
    <name type="ordered locus">NMB1643</name>
</gene>
<feature type="chain" id="PRO_0000137227" description="Translation initiation factor IF-2">
    <location>
        <begin position="1"/>
        <end position="962"/>
    </location>
</feature>
<feature type="domain" description="tr-type G">
    <location>
        <begin position="462"/>
        <end position="631"/>
    </location>
</feature>
<feature type="region of interest" description="Disordered" evidence="3">
    <location>
        <begin position="99"/>
        <end position="366"/>
    </location>
</feature>
<feature type="region of interest" description="G1" evidence="1">
    <location>
        <begin position="471"/>
        <end position="478"/>
    </location>
</feature>
<feature type="region of interest" description="G2" evidence="1">
    <location>
        <begin position="496"/>
        <end position="500"/>
    </location>
</feature>
<feature type="region of interest" description="G3" evidence="1">
    <location>
        <begin position="517"/>
        <end position="520"/>
    </location>
</feature>
<feature type="region of interest" description="G4" evidence="1">
    <location>
        <begin position="571"/>
        <end position="574"/>
    </location>
</feature>
<feature type="region of interest" description="G5" evidence="1">
    <location>
        <begin position="607"/>
        <end position="609"/>
    </location>
</feature>
<feature type="compositionally biased region" description="Basic and acidic residues" evidence="3">
    <location>
        <begin position="117"/>
        <end position="141"/>
    </location>
</feature>
<feature type="compositionally biased region" description="Low complexity" evidence="3">
    <location>
        <begin position="145"/>
        <end position="155"/>
    </location>
</feature>
<feature type="compositionally biased region" description="Basic and acidic residues" evidence="3">
    <location>
        <begin position="173"/>
        <end position="216"/>
    </location>
</feature>
<feature type="compositionally biased region" description="Low complexity" evidence="3">
    <location>
        <begin position="219"/>
        <end position="234"/>
    </location>
</feature>
<feature type="compositionally biased region" description="Basic and acidic residues" evidence="3">
    <location>
        <begin position="235"/>
        <end position="269"/>
    </location>
</feature>
<feature type="compositionally biased region" description="Low complexity" evidence="3">
    <location>
        <begin position="270"/>
        <end position="283"/>
    </location>
</feature>
<feature type="compositionally biased region" description="Basic and acidic residues" evidence="3">
    <location>
        <begin position="314"/>
        <end position="327"/>
    </location>
</feature>
<feature type="compositionally biased region" description="Basic and acidic residues" evidence="3">
    <location>
        <begin position="338"/>
        <end position="354"/>
    </location>
</feature>
<feature type="binding site" evidence="2">
    <location>
        <begin position="471"/>
        <end position="478"/>
    </location>
    <ligand>
        <name>GTP</name>
        <dbReference type="ChEBI" id="CHEBI:37565"/>
    </ligand>
</feature>
<feature type="binding site" evidence="2">
    <location>
        <begin position="517"/>
        <end position="521"/>
    </location>
    <ligand>
        <name>GTP</name>
        <dbReference type="ChEBI" id="CHEBI:37565"/>
    </ligand>
</feature>
<feature type="binding site" evidence="2">
    <location>
        <begin position="571"/>
        <end position="574"/>
    </location>
    <ligand>
        <name>GTP</name>
        <dbReference type="ChEBI" id="CHEBI:37565"/>
    </ligand>
</feature>
<proteinExistence type="inferred from homology"/>
<dbReference type="EMBL" id="AE002098">
    <property type="protein sequence ID" value="AAF41992.1"/>
    <property type="molecule type" value="Genomic_DNA"/>
</dbReference>
<dbReference type="PIR" id="C81060">
    <property type="entry name" value="C81060"/>
</dbReference>
<dbReference type="RefSeq" id="NP_274648.1">
    <property type="nucleotide sequence ID" value="NC_003112.2"/>
</dbReference>
<dbReference type="RefSeq" id="WP_002225000.1">
    <property type="nucleotide sequence ID" value="NC_003112.2"/>
</dbReference>
<dbReference type="SMR" id="Q9JYD2"/>
<dbReference type="FunCoup" id="Q9JYD2">
    <property type="interactions" value="546"/>
</dbReference>
<dbReference type="STRING" id="122586.NMB1643"/>
<dbReference type="PaxDb" id="122586-NMB1643"/>
<dbReference type="KEGG" id="nme:NMB1643"/>
<dbReference type="PATRIC" id="fig|122586.8.peg.2115"/>
<dbReference type="HOGENOM" id="CLU_006301_6_0_4"/>
<dbReference type="InParanoid" id="Q9JYD2"/>
<dbReference type="OrthoDB" id="9811804at2"/>
<dbReference type="Proteomes" id="UP000000425">
    <property type="component" value="Chromosome"/>
</dbReference>
<dbReference type="GO" id="GO:0005737">
    <property type="term" value="C:cytoplasm"/>
    <property type="evidence" value="ECO:0000318"/>
    <property type="project" value="GO_Central"/>
</dbReference>
<dbReference type="GO" id="GO:0005829">
    <property type="term" value="C:cytosol"/>
    <property type="evidence" value="ECO:0000318"/>
    <property type="project" value="GO_Central"/>
</dbReference>
<dbReference type="GO" id="GO:0005525">
    <property type="term" value="F:GTP binding"/>
    <property type="evidence" value="ECO:0007669"/>
    <property type="project" value="UniProtKB-KW"/>
</dbReference>
<dbReference type="GO" id="GO:0003924">
    <property type="term" value="F:GTPase activity"/>
    <property type="evidence" value="ECO:0007669"/>
    <property type="project" value="UniProtKB-UniRule"/>
</dbReference>
<dbReference type="GO" id="GO:0003743">
    <property type="term" value="F:translation initiation factor activity"/>
    <property type="evidence" value="ECO:0000318"/>
    <property type="project" value="GO_Central"/>
</dbReference>
<dbReference type="GO" id="GO:0006413">
    <property type="term" value="P:translational initiation"/>
    <property type="evidence" value="ECO:0000318"/>
    <property type="project" value="GO_Central"/>
</dbReference>
<dbReference type="CDD" id="cd01887">
    <property type="entry name" value="IF2_eIF5B"/>
    <property type="match status" value="1"/>
</dbReference>
<dbReference type="CDD" id="cd03702">
    <property type="entry name" value="IF2_mtIF2_II"/>
    <property type="match status" value="1"/>
</dbReference>
<dbReference type="CDD" id="cd03692">
    <property type="entry name" value="mtIF2_IVc"/>
    <property type="match status" value="1"/>
</dbReference>
<dbReference type="FunFam" id="2.40.30.10:FF:000007">
    <property type="entry name" value="Translation initiation factor IF-2"/>
    <property type="match status" value="1"/>
</dbReference>
<dbReference type="FunFam" id="2.40.30.10:FF:000008">
    <property type="entry name" value="Translation initiation factor IF-2"/>
    <property type="match status" value="1"/>
</dbReference>
<dbReference type="FunFam" id="3.40.50.10050:FF:000001">
    <property type="entry name" value="Translation initiation factor IF-2"/>
    <property type="match status" value="1"/>
</dbReference>
<dbReference type="FunFam" id="3.40.50.300:FF:000019">
    <property type="entry name" value="Translation initiation factor IF-2"/>
    <property type="match status" value="1"/>
</dbReference>
<dbReference type="Gene3D" id="3.40.50.300">
    <property type="entry name" value="P-loop containing nucleotide triphosphate hydrolases"/>
    <property type="match status" value="1"/>
</dbReference>
<dbReference type="Gene3D" id="3.30.56.50">
    <property type="entry name" value="Putative DNA-binding domain, N-terminal subdomain of bacterial translation initiation factor IF2"/>
    <property type="match status" value="1"/>
</dbReference>
<dbReference type="Gene3D" id="2.40.30.10">
    <property type="entry name" value="Translation factors"/>
    <property type="match status" value="2"/>
</dbReference>
<dbReference type="Gene3D" id="3.40.50.10050">
    <property type="entry name" value="Translation initiation factor IF- 2, domain 3"/>
    <property type="match status" value="1"/>
</dbReference>
<dbReference type="HAMAP" id="MF_00100_B">
    <property type="entry name" value="IF_2_B"/>
    <property type="match status" value="1"/>
</dbReference>
<dbReference type="InterPro" id="IPR009061">
    <property type="entry name" value="DNA-bd_dom_put_sf"/>
</dbReference>
<dbReference type="InterPro" id="IPR053905">
    <property type="entry name" value="EF-G-like_DII"/>
</dbReference>
<dbReference type="InterPro" id="IPR044145">
    <property type="entry name" value="IF2_II"/>
</dbReference>
<dbReference type="InterPro" id="IPR006847">
    <property type="entry name" value="IF2_N"/>
</dbReference>
<dbReference type="InterPro" id="IPR027417">
    <property type="entry name" value="P-loop_NTPase"/>
</dbReference>
<dbReference type="InterPro" id="IPR005225">
    <property type="entry name" value="Small_GTP-bd"/>
</dbReference>
<dbReference type="InterPro" id="IPR000795">
    <property type="entry name" value="T_Tr_GTP-bd_dom"/>
</dbReference>
<dbReference type="InterPro" id="IPR000178">
    <property type="entry name" value="TF_IF2_bacterial-like"/>
</dbReference>
<dbReference type="InterPro" id="IPR015760">
    <property type="entry name" value="TIF_IF2"/>
</dbReference>
<dbReference type="InterPro" id="IPR023115">
    <property type="entry name" value="TIF_IF2_dom3"/>
</dbReference>
<dbReference type="InterPro" id="IPR036925">
    <property type="entry name" value="TIF_IF2_dom3_sf"/>
</dbReference>
<dbReference type="InterPro" id="IPR009000">
    <property type="entry name" value="Transl_B-barrel_sf"/>
</dbReference>
<dbReference type="NCBIfam" id="TIGR00487">
    <property type="entry name" value="IF-2"/>
    <property type="match status" value="1"/>
</dbReference>
<dbReference type="NCBIfam" id="TIGR00231">
    <property type="entry name" value="small_GTP"/>
    <property type="match status" value="1"/>
</dbReference>
<dbReference type="PANTHER" id="PTHR43381:SF5">
    <property type="entry name" value="TR-TYPE G DOMAIN-CONTAINING PROTEIN"/>
    <property type="match status" value="1"/>
</dbReference>
<dbReference type="PANTHER" id="PTHR43381">
    <property type="entry name" value="TRANSLATION INITIATION FACTOR IF-2-RELATED"/>
    <property type="match status" value="1"/>
</dbReference>
<dbReference type="Pfam" id="PF22042">
    <property type="entry name" value="EF-G_D2"/>
    <property type="match status" value="1"/>
</dbReference>
<dbReference type="Pfam" id="PF00009">
    <property type="entry name" value="GTP_EFTU"/>
    <property type="match status" value="1"/>
</dbReference>
<dbReference type="Pfam" id="PF11987">
    <property type="entry name" value="IF-2"/>
    <property type="match status" value="1"/>
</dbReference>
<dbReference type="Pfam" id="PF04760">
    <property type="entry name" value="IF2_N"/>
    <property type="match status" value="2"/>
</dbReference>
<dbReference type="SUPFAM" id="SSF52156">
    <property type="entry name" value="Initiation factor IF2/eIF5b, domain 3"/>
    <property type="match status" value="1"/>
</dbReference>
<dbReference type="SUPFAM" id="SSF52540">
    <property type="entry name" value="P-loop containing nucleoside triphosphate hydrolases"/>
    <property type="match status" value="1"/>
</dbReference>
<dbReference type="SUPFAM" id="SSF46955">
    <property type="entry name" value="Putative DNA-binding domain"/>
    <property type="match status" value="1"/>
</dbReference>
<dbReference type="SUPFAM" id="SSF50447">
    <property type="entry name" value="Translation proteins"/>
    <property type="match status" value="2"/>
</dbReference>
<dbReference type="PROSITE" id="PS51722">
    <property type="entry name" value="G_TR_2"/>
    <property type="match status" value="1"/>
</dbReference>
<dbReference type="PROSITE" id="PS01176">
    <property type="entry name" value="IF2"/>
    <property type="match status" value="1"/>
</dbReference>
<evidence type="ECO:0000250" key="1"/>
<evidence type="ECO:0000255" key="2">
    <source>
        <dbReference type="HAMAP-Rule" id="MF_00100"/>
    </source>
</evidence>
<evidence type="ECO:0000256" key="3">
    <source>
        <dbReference type="SAM" id="MobiDB-lite"/>
    </source>
</evidence>
<name>IF2_NEIMB</name>
<protein>
    <recommendedName>
        <fullName evidence="2">Translation initiation factor IF-2</fullName>
    </recommendedName>
</protein>
<reference key="1">
    <citation type="journal article" date="2000" name="Science">
        <title>Complete genome sequence of Neisseria meningitidis serogroup B strain MC58.</title>
        <authorList>
            <person name="Tettelin H."/>
            <person name="Saunders N.J."/>
            <person name="Heidelberg J.F."/>
            <person name="Jeffries A.C."/>
            <person name="Nelson K.E."/>
            <person name="Eisen J.A."/>
            <person name="Ketchum K.A."/>
            <person name="Hood D.W."/>
            <person name="Peden J.F."/>
            <person name="Dodson R.J."/>
            <person name="Nelson W.C."/>
            <person name="Gwinn M.L."/>
            <person name="DeBoy R.T."/>
            <person name="Peterson J.D."/>
            <person name="Hickey E.K."/>
            <person name="Haft D.H."/>
            <person name="Salzberg S.L."/>
            <person name="White O."/>
            <person name="Fleischmann R.D."/>
            <person name="Dougherty B.A."/>
            <person name="Mason T.M."/>
            <person name="Ciecko A."/>
            <person name="Parksey D.S."/>
            <person name="Blair E."/>
            <person name="Cittone H."/>
            <person name="Clark E.B."/>
            <person name="Cotton M.D."/>
            <person name="Utterback T.R."/>
            <person name="Khouri H.M."/>
            <person name="Qin H."/>
            <person name="Vamathevan J.J."/>
            <person name="Gill J."/>
            <person name="Scarlato V."/>
            <person name="Masignani V."/>
            <person name="Pizza M."/>
            <person name="Grandi G."/>
            <person name="Sun L."/>
            <person name="Smith H.O."/>
            <person name="Fraser C.M."/>
            <person name="Moxon E.R."/>
            <person name="Rappuoli R."/>
            <person name="Venter J.C."/>
        </authorList>
    </citation>
    <scope>NUCLEOTIDE SEQUENCE [LARGE SCALE GENOMIC DNA]</scope>
    <source>
        <strain>ATCC BAA-335 / MC58</strain>
    </source>
</reference>